<comment type="function">
    <text evidence="1">Involved in the biosynthesis of the chorismate, which leads to the biosynthesis of aromatic amino acids. Catalyzes the reversible NADPH linked reduction of 3-dehydroshikimate (DHSA) to yield shikimate (SA).</text>
</comment>
<comment type="catalytic activity">
    <reaction evidence="1">
        <text>shikimate + NADP(+) = 3-dehydroshikimate + NADPH + H(+)</text>
        <dbReference type="Rhea" id="RHEA:17737"/>
        <dbReference type="ChEBI" id="CHEBI:15378"/>
        <dbReference type="ChEBI" id="CHEBI:16630"/>
        <dbReference type="ChEBI" id="CHEBI:36208"/>
        <dbReference type="ChEBI" id="CHEBI:57783"/>
        <dbReference type="ChEBI" id="CHEBI:58349"/>
        <dbReference type="EC" id="1.1.1.25"/>
    </reaction>
</comment>
<comment type="pathway">
    <text evidence="1">Metabolic intermediate biosynthesis; chorismate biosynthesis; chorismate from D-erythrose 4-phosphate and phosphoenolpyruvate: step 4/7.</text>
</comment>
<comment type="subunit">
    <text evidence="1">Homodimer.</text>
</comment>
<comment type="similarity">
    <text evidence="1">Belongs to the shikimate dehydrogenase family.</text>
</comment>
<comment type="sequence caution" evidence="2">
    <conflict type="erroneous initiation">
        <sequence resource="EMBL-CDS" id="AAN47837"/>
    </conflict>
    <text>Extended N-terminus.</text>
</comment>
<organism>
    <name type="scientific">Leptospira interrogans serogroup Icterohaemorrhagiae serovar Lai (strain 56601)</name>
    <dbReference type="NCBI Taxonomy" id="189518"/>
    <lineage>
        <taxon>Bacteria</taxon>
        <taxon>Pseudomonadati</taxon>
        <taxon>Spirochaetota</taxon>
        <taxon>Spirochaetia</taxon>
        <taxon>Leptospirales</taxon>
        <taxon>Leptospiraceae</taxon>
        <taxon>Leptospira</taxon>
    </lineage>
</organism>
<evidence type="ECO:0000255" key="1">
    <source>
        <dbReference type="HAMAP-Rule" id="MF_00222"/>
    </source>
</evidence>
<evidence type="ECO:0000305" key="2"/>
<name>AROE_LEPIN</name>
<feature type="chain" id="PRO_0000136011" description="Shikimate dehydrogenase (NADP(+))">
    <location>
        <begin position="1"/>
        <end position="290"/>
    </location>
</feature>
<feature type="active site" description="Proton acceptor" evidence="1">
    <location>
        <position position="72"/>
    </location>
</feature>
<feature type="binding site" evidence="1">
    <location>
        <begin position="22"/>
        <end position="24"/>
    </location>
    <ligand>
        <name>shikimate</name>
        <dbReference type="ChEBI" id="CHEBI:36208"/>
    </ligand>
</feature>
<feature type="binding site" evidence="1">
    <location>
        <position position="68"/>
    </location>
    <ligand>
        <name>shikimate</name>
        <dbReference type="ChEBI" id="CHEBI:36208"/>
    </ligand>
</feature>
<feature type="binding site" evidence="1">
    <location>
        <position position="84"/>
    </location>
    <ligand>
        <name>NADP(+)</name>
        <dbReference type="ChEBI" id="CHEBI:58349"/>
    </ligand>
</feature>
<feature type="binding site" evidence="1">
    <location>
        <position position="93"/>
    </location>
    <ligand>
        <name>shikimate</name>
        <dbReference type="ChEBI" id="CHEBI:36208"/>
    </ligand>
</feature>
<feature type="binding site" evidence="1">
    <location>
        <position position="108"/>
    </location>
    <ligand>
        <name>shikimate</name>
        <dbReference type="ChEBI" id="CHEBI:36208"/>
    </ligand>
</feature>
<feature type="binding site" evidence="1">
    <location>
        <begin position="133"/>
        <end position="137"/>
    </location>
    <ligand>
        <name>NADP(+)</name>
        <dbReference type="ChEBI" id="CHEBI:58349"/>
    </ligand>
</feature>
<feature type="binding site" evidence="1">
    <location>
        <position position="228"/>
    </location>
    <ligand>
        <name>NADP(+)</name>
        <dbReference type="ChEBI" id="CHEBI:58349"/>
    </ligand>
</feature>
<feature type="binding site" evidence="1">
    <location>
        <position position="230"/>
    </location>
    <ligand>
        <name>shikimate</name>
        <dbReference type="ChEBI" id="CHEBI:36208"/>
    </ligand>
</feature>
<feature type="binding site" evidence="1">
    <location>
        <position position="251"/>
    </location>
    <ligand>
        <name>NADP(+)</name>
        <dbReference type="ChEBI" id="CHEBI:58349"/>
    </ligand>
</feature>
<dbReference type="EC" id="1.1.1.25" evidence="1"/>
<dbReference type="EMBL" id="AE010300">
    <property type="protein sequence ID" value="AAN47837.1"/>
    <property type="status" value="ALT_INIT"/>
    <property type="molecule type" value="Genomic_DNA"/>
</dbReference>
<dbReference type="RefSeq" id="NP_710819.1">
    <property type="nucleotide sequence ID" value="NC_004342.2"/>
</dbReference>
<dbReference type="RefSeq" id="WP_033107988.1">
    <property type="nucleotide sequence ID" value="NC_004342.2"/>
</dbReference>
<dbReference type="SMR" id="Q8F8C0"/>
<dbReference type="FunCoup" id="Q8F8C0">
    <property type="interactions" value="236"/>
</dbReference>
<dbReference type="STRING" id="189518.LA_0638"/>
<dbReference type="PaxDb" id="189518-LA_0638"/>
<dbReference type="EnsemblBacteria" id="AAN47837">
    <property type="protein sequence ID" value="AAN47837"/>
    <property type="gene ID" value="LA_0638"/>
</dbReference>
<dbReference type="KEGG" id="lil:LA_0638"/>
<dbReference type="PATRIC" id="fig|189518.3.peg.638"/>
<dbReference type="HOGENOM" id="CLU_044063_3_1_12"/>
<dbReference type="InParanoid" id="Q8F8C0"/>
<dbReference type="OrthoDB" id="9792692at2"/>
<dbReference type="UniPathway" id="UPA00053">
    <property type="reaction ID" value="UER00087"/>
</dbReference>
<dbReference type="Proteomes" id="UP000001408">
    <property type="component" value="Chromosome I"/>
</dbReference>
<dbReference type="GO" id="GO:0005829">
    <property type="term" value="C:cytosol"/>
    <property type="evidence" value="ECO:0000318"/>
    <property type="project" value="GO_Central"/>
</dbReference>
<dbReference type="GO" id="GO:0050661">
    <property type="term" value="F:NADP binding"/>
    <property type="evidence" value="ECO:0000318"/>
    <property type="project" value="GO_Central"/>
</dbReference>
<dbReference type="GO" id="GO:0004764">
    <property type="term" value="F:shikimate 3-dehydrogenase (NADP+) activity"/>
    <property type="evidence" value="ECO:0000318"/>
    <property type="project" value="GO_Central"/>
</dbReference>
<dbReference type="GO" id="GO:0008652">
    <property type="term" value="P:amino acid biosynthetic process"/>
    <property type="evidence" value="ECO:0007669"/>
    <property type="project" value="UniProtKB-KW"/>
</dbReference>
<dbReference type="GO" id="GO:0009073">
    <property type="term" value="P:aromatic amino acid family biosynthetic process"/>
    <property type="evidence" value="ECO:0007669"/>
    <property type="project" value="UniProtKB-KW"/>
</dbReference>
<dbReference type="GO" id="GO:0009423">
    <property type="term" value="P:chorismate biosynthetic process"/>
    <property type="evidence" value="ECO:0000318"/>
    <property type="project" value="GO_Central"/>
</dbReference>
<dbReference type="GO" id="GO:0019632">
    <property type="term" value="P:shikimate metabolic process"/>
    <property type="evidence" value="ECO:0000318"/>
    <property type="project" value="GO_Central"/>
</dbReference>
<dbReference type="CDD" id="cd01065">
    <property type="entry name" value="NAD_bind_Shikimate_DH"/>
    <property type="match status" value="1"/>
</dbReference>
<dbReference type="Gene3D" id="3.40.50.10860">
    <property type="entry name" value="Leucine Dehydrogenase, chain A, domain 1"/>
    <property type="match status" value="1"/>
</dbReference>
<dbReference type="Gene3D" id="3.40.50.720">
    <property type="entry name" value="NAD(P)-binding Rossmann-like Domain"/>
    <property type="match status" value="1"/>
</dbReference>
<dbReference type="HAMAP" id="MF_00222">
    <property type="entry name" value="Shikimate_DH_AroE"/>
    <property type="match status" value="1"/>
</dbReference>
<dbReference type="InterPro" id="IPR046346">
    <property type="entry name" value="Aminoacid_DH-like_N_sf"/>
</dbReference>
<dbReference type="InterPro" id="IPR036291">
    <property type="entry name" value="NAD(P)-bd_dom_sf"/>
</dbReference>
<dbReference type="InterPro" id="IPR041121">
    <property type="entry name" value="SDH_C"/>
</dbReference>
<dbReference type="InterPro" id="IPR011342">
    <property type="entry name" value="Shikimate_DH"/>
</dbReference>
<dbReference type="InterPro" id="IPR013708">
    <property type="entry name" value="Shikimate_DH-bd_N"/>
</dbReference>
<dbReference type="InterPro" id="IPR022893">
    <property type="entry name" value="Shikimate_DH_fam"/>
</dbReference>
<dbReference type="NCBIfam" id="TIGR00507">
    <property type="entry name" value="aroE"/>
    <property type="match status" value="1"/>
</dbReference>
<dbReference type="PANTHER" id="PTHR21089:SF1">
    <property type="entry name" value="BIFUNCTIONAL 3-DEHYDROQUINATE DEHYDRATASE_SHIKIMATE DEHYDROGENASE, CHLOROPLASTIC"/>
    <property type="match status" value="1"/>
</dbReference>
<dbReference type="PANTHER" id="PTHR21089">
    <property type="entry name" value="SHIKIMATE DEHYDROGENASE"/>
    <property type="match status" value="1"/>
</dbReference>
<dbReference type="Pfam" id="PF18317">
    <property type="entry name" value="SDH_C"/>
    <property type="match status" value="1"/>
</dbReference>
<dbReference type="Pfam" id="PF08501">
    <property type="entry name" value="Shikimate_dh_N"/>
    <property type="match status" value="1"/>
</dbReference>
<dbReference type="SUPFAM" id="SSF53223">
    <property type="entry name" value="Aminoacid dehydrogenase-like, N-terminal domain"/>
    <property type="match status" value="1"/>
</dbReference>
<dbReference type="SUPFAM" id="SSF51735">
    <property type="entry name" value="NAD(P)-binding Rossmann-fold domains"/>
    <property type="match status" value="1"/>
</dbReference>
<accession>Q8F8C0</accession>
<sequence>MKTKTNQSVKTFGIVGFPLSHSLSPLIHNSIYKDRNINASYLVFETQNLNVEKIQEFRNSGILGLSVTIPHKETAFTLADKADDTSRIMKASNTLLIGPDSTYAYNTDGEGAYHSILEFSPESLKTGKVVILGSGGSARGIAFSLAVSGKIQNLLVCSRNEITAKEICLLVTKNSNVKAEPISQDVLLTRKEEISLVIHTTPLGMKGQSPGPYLPEDFFNSNMTLFDIVYNPLETPLVKTAQKAGAKIIPGSEMLLYQAMKQFELFTGISPNAEDIIKTRERLSKALENR</sequence>
<keyword id="KW-0028">Amino-acid biosynthesis</keyword>
<keyword id="KW-0057">Aromatic amino acid biosynthesis</keyword>
<keyword id="KW-0521">NADP</keyword>
<keyword id="KW-0560">Oxidoreductase</keyword>
<keyword id="KW-1185">Reference proteome</keyword>
<protein>
    <recommendedName>
        <fullName evidence="1">Shikimate dehydrogenase (NADP(+))</fullName>
        <shortName evidence="1">SDH</shortName>
        <ecNumber evidence="1">1.1.1.25</ecNumber>
    </recommendedName>
</protein>
<gene>
    <name evidence="1" type="primary">aroE</name>
    <name type="ordered locus">LA_0638</name>
</gene>
<proteinExistence type="inferred from homology"/>
<reference key="1">
    <citation type="journal article" date="2003" name="Nature">
        <title>Unique physiological and pathogenic features of Leptospira interrogans revealed by whole-genome sequencing.</title>
        <authorList>
            <person name="Ren S.-X."/>
            <person name="Fu G."/>
            <person name="Jiang X.-G."/>
            <person name="Zeng R."/>
            <person name="Miao Y.-G."/>
            <person name="Xu H."/>
            <person name="Zhang Y.-X."/>
            <person name="Xiong H."/>
            <person name="Lu G."/>
            <person name="Lu L.-F."/>
            <person name="Jiang H.-Q."/>
            <person name="Jia J."/>
            <person name="Tu Y.-F."/>
            <person name="Jiang J.-X."/>
            <person name="Gu W.-Y."/>
            <person name="Zhang Y.-Q."/>
            <person name="Cai Z."/>
            <person name="Sheng H.-H."/>
            <person name="Yin H.-F."/>
            <person name="Zhang Y."/>
            <person name="Zhu G.-F."/>
            <person name="Wan M."/>
            <person name="Huang H.-L."/>
            <person name="Qian Z."/>
            <person name="Wang S.-Y."/>
            <person name="Ma W."/>
            <person name="Yao Z.-J."/>
            <person name="Shen Y."/>
            <person name="Qiang B.-Q."/>
            <person name="Xia Q.-C."/>
            <person name="Guo X.-K."/>
            <person name="Danchin A."/>
            <person name="Saint Girons I."/>
            <person name="Somerville R.L."/>
            <person name="Wen Y.-M."/>
            <person name="Shi M.-H."/>
            <person name="Chen Z."/>
            <person name="Xu J.-G."/>
            <person name="Zhao G.-P."/>
        </authorList>
    </citation>
    <scope>NUCLEOTIDE SEQUENCE [LARGE SCALE GENOMIC DNA]</scope>
    <source>
        <strain>56601</strain>
    </source>
</reference>